<organism>
    <name type="scientific">Aliivibrio salmonicida (strain LFI1238)</name>
    <name type="common">Vibrio salmonicida (strain LFI1238)</name>
    <dbReference type="NCBI Taxonomy" id="316275"/>
    <lineage>
        <taxon>Bacteria</taxon>
        <taxon>Pseudomonadati</taxon>
        <taxon>Pseudomonadota</taxon>
        <taxon>Gammaproteobacteria</taxon>
        <taxon>Vibrionales</taxon>
        <taxon>Vibrionaceae</taxon>
        <taxon>Aliivibrio</taxon>
    </lineage>
</organism>
<protein>
    <recommendedName>
        <fullName evidence="1">4-hydroxy-tetrahydrodipicolinate synthase</fullName>
        <shortName evidence="1">HTPA synthase</shortName>
        <ecNumber evidence="1">4.3.3.7</ecNumber>
    </recommendedName>
</protein>
<gene>
    <name evidence="1" type="primary">dapA</name>
    <name type="ordered locus">VSAL_I2379</name>
</gene>
<sequence>MFSGSIVALVTPLDTDGEVDYTSLKNLVDYHINAGTDGIVAVGTTGESATLSVEEHVKLVMKTLEFSDGRIPVIAGTGANATHEAVTFSKLFRDSGVAGCLSVTPYYNKPTQEGLFLHYKAISESTDVPQILYNVPGRTAVDLLPETVARLAEFDNIVALKDATAELDRIAITRELCGDKFIQLSGDDATALEFVKMGGHGVISVTANVAAKDMATMFALAAQGKFEEAEIINQRLMPLHQDLFVEANPMPVKWATHRLGMITHPDIRLPLTELSHSAQPVVEQALIRAGVLK</sequence>
<reference key="1">
    <citation type="journal article" date="2008" name="BMC Genomics">
        <title>The genome sequence of the fish pathogen Aliivibrio salmonicida strain LFI1238 shows extensive evidence of gene decay.</title>
        <authorList>
            <person name="Hjerde E."/>
            <person name="Lorentzen M.S."/>
            <person name="Holden M.T."/>
            <person name="Seeger K."/>
            <person name="Paulsen S."/>
            <person name="Bason N."/>
            <person name="Churcher C."/>
            <person name="Harris D."/>
            <person name="Norbertczak H."/>
            <person name="Quail M.A."/>
            <person name="Sanders S."/>
            <person name="Thurston S."/>
            <person name="Parkhill J."/>
            <person name="Willassen N.P."/>
            <person name="Thomson N.R."/>
        </authorList>
    </citation>
    <scope>NUCLEOTIDE SEQUENCE [LARGE SCALE GENOMIC DNA]</scope>
    <source>
        <strain>LFI1238</strain>
    </source>
</reference>
<keyword id="KW-0028">Amino-acid biosynthesis</keyword>
<keyword id="KW-0963">Cytoplasm</keyword>
<keyword id="KW-0220">Diaminopimelate biosynthesis</keyword>
<keyword id="KW-0456">Lyase</keyword>
<keyword id="KW-0457">Lysine biosynthesis</keyword>
<keyword id="KW-0704">Schiff base</keyword>
<name>DAPA_ALISL</name>
<evidence type="ECO:0000255" key="1">
    <source>
        <dbReference type="HAMAP-Rule" id="MF_00418"/>
    </source>
</evidence>
<evidence type="ECO:0000305" key="2"/>
<comment type="function">
    <text evidence="1">Catalyzes the condensation of (S)-aspartate-beta-semialdehyde [(S)-ASA] and pyruvate to 4-hydroxy-tetrahydrodipicolinate (HTPA).</text>
</comment>
<comment type="catalytic activity">
    <reaction evidence="1">
        <text>L-aspartate 4-semialdehyde + pyruvate = (2S,4S)-4-hydroxy-2,3,4,5-tetrahydrodipicolinate + H2O + H(+)</text>
        <dbReference type="Rhea" id="RHEA:34171"/>
        <dbReference type="ChEBI" id="CHEBI:15361"/>
        <dbReference type="ChEBI" id="CHEBI:15377"/>
        <dbReference type="ChEBI" id="CHEBI:15378"/>
        <dbReference type="ChEBI" id="CHEBI:67139"/>
        <dbReference type="ChEBI" id="CHEBI:537519"/>
        <dbReference type="EC" id="4.3.3.7"/>
    </reaction>
</comment>
<comment type="pathway">
    <text evidence="1">Amino-acid biosynthesis; L-lysine biosynthesis via DAP pathway; (S)-tetrahydrodipicolinate from L-aspartate: step 3/4.</text>
</comment>
<comment type="subunit">
    <text evidence="1">Homotetramer; dimer of dimers.</text>
</comment>
<comment type="subcellular location">
    <subcellularLocation>
        <location evidence="1">Cytoplasm</location>
    </subcellularLocation>
</comment>
<comment type="similarity">
    <text evidence="1">Belongs to the DapA family.</text>
</comment>
<comment type="caution">
    <text evidence="2">Was originally thought to be a dihydrodipicolinate synthase (DHDPS), catalyzing the condensation of (S)-aspartate-beta-semialdehyde [(S)-ASA] and pyruvate to dihydrodipicolinate (DHDP). However, it was shown in E.coli that the product of the enzymatic reaction is not dihydrodipicolinate but in fact (4S)-4-hydroxy-2,3,4,5-tetrahydro-(2S)-dipicolinic acid (HTPA), and that the consecutive dehydration reaction leading to DHDP is not spontaneous but catalyzed by DapB.</text>
</comment>
<dbReference type="EC" id="4.3.3.7" evidence="1"/>
<dbReference type="EMBL" id="FM178379">
    <property type="protein sequence ID" value="CAQ80063.1"/>
    <property type="molecule type" value="Genomic_DNA"/>
</dbReference>
<dbReference type="RefSeq" id="WP_012550872.1">
    <property type="nucleotide sequence ID" value="NC_011312.1"/>
</dbReference>
<dbReference type="SMR" id="B6EJT2"/>
<dbReference type="KEGG" id="vsa:VSAL_I2379"/>
<dbReference type="eggNOG" id="COG0329">
    <property type="taxonomic scope" value="Bacteria"/>
</dbReference>
<dbReference type="HOGENOM" id="CLU_049343_7_1_6"/>
<dbReference type="UniPathway" id="UPA00034">
    <property type="reaction ID" value="UER00017"/>
</dbReference>
<dbReference type="Proteomes" id="UP000001730">
    <property type="component" value="Chromosome 1"/>
</dbReference>
<dbReference type="GO" id="GO:0005829">
    <property type="term" value="C:cytosol"/>
    <property type="evidence" value="ECO:0007669"/>
    <property type="project" value="TreeGrafter"/>
</dbReference>
<dbReference type="GO" id="GO:0008840">
    <property type="term" value="F:4-hydroxy-tetrahydrodipicolinate synthase activity"/>
    <property type="evidence" value="ECO:0007669"/>
    <property type="project" value="UniProtKB-UniRule"/>
</dbReference>
<dbReference type="GO" id="GO:0019877">
    <property type="term" value="P:diaminopimelate biosynthetic process"/>
    <property type="evidence" value="ECO:0007669"/>
    <property type="project" value="UniProtKB-UniRule"/>
</dbReference>
<dbReference type="GO" id="GO:0009089">
    <property type="term" value="P:lysine biosynthetic process via diaminopimelate"/>
    <property type="evidence" value="ECO:0007669"/>
    <property type="project" value="UniProtKB-UniRule"/>
</dbReference>
<dbReference type="CDD" id="cd00950">
    <property type="entry name" value="DHDPS"/>
    <property type="match status" value="1"/>
</dbReference>
<dbReference type="FunFam" id="3.20.20.70:FF:000046">
    <property type="entry name" value="4-hydroxy-tetrahydrodipicolinate synthase"/>
    <property type="match status" value="1"/>
</dbReference>
<dbReference type="Gene3D" id="3.20.20.70">
    <property type="entry name" value="Aldolase class I"/>
    <property type="match status" value="1"/>
</dbReference>
<dbReference type="HAMAP" id="MF_00418">
    <property type="entry name" value="DapA"/>
    <property type="match status" value="1"/>
</dbReference>
<dbReference type="InterPro" id="IPR013785">
    <property type="entry name" value="Aldolase_TIM"/>
</dbReference>
<dbReference type="InterPro" id="IPR005263">
    <property type="entry name" value="DapA"/>
</dbReference>
<dbReference type="InterPro" id="IPR002220">
    <property type="entry name" value="DapA-like"/>
</dbReference>
<dbReference type="InterPro" id="IPR020625">
    <property type="entry name" value="Schiff_base-form_aldolases_AS"/>
</dbReference>
<dbReference type="InterPro" id="IPR020624">
    <property type="entry name" value="Schiff_base-form_aldolases_CS"/>
</dbReference>
<dbReference type="NCBIfam" id="TIGR00674">
    <property type="entry name" value="dapA"/>
    <property type="match status" value="1"/>
</dbReference>
<dbReference type="PANTHER" id="PTHR12128:SF66">
    <property type="entry name" value="4-HYDROXY-2-OXOGLUTARATE ALDOLASE, MITOCHONDRIAL"/>
    <property type="match status" value="1"/>
</dbReference>
<dbReference type="PANTHER" id="PTHR12128">
    <property type="entry name" value="DIHYDRODIPICOLINATE SYNTHASE"/>
    <property type="match status" value="1"/>
</dbReference>
<dbReference type="Pfam" id="PF00701">
    <property type="entry name" value="DHDPS"/>
    <property type="match status" value="1"/>
</dbReference>
<dbReference type="PIRSF" id="PIRSF001365">
    <property type="entry name" value="DHDPS"/>
    <property type="match status" value="1"/>
</dbReference>
<dbReference type="PRINTS" id="PR00146">
    <property type="entry name" value="DHPICSNTHASE"/>
</dbReference>
<dbReference type="SMART" id="SM01130">
    <property type="entry name" value="DHDPS"/>
    <property type="match status" value="1"/>
</dbReference>
<dbReference type="SUPFAM" id="SSF51569">
    <property type="entry name" value="Aldolase"/>
    <property type="match status" value="1"/>
</dbReference>
<dbReference type="PROSITE" id="PS00665">
    <property type="entry name" value="DHDPS_1"/>
    <property type="match status" value="1"/>
</dbReference>
<dbReference type="PROSITE" id="PS00666">
    <property type="entry name" value="DHDPS_2"/>
    <property type="match status" value="1"/>
</dbReference>
<feature type="chain" id="PRO_1000124015" description="4-hydroxy-tetrahydrodipicolinate synthase">
    <location>
        <begin position="1"/>
        <end position="293"/>
    </location>
</feature>
<feature type="active site" description="Proton donor/acceptor" evidence="1">
    <location>
        <position position="133"/>
    </location>
</feature>
<feature type="active site" description="Schiff-base intermediate with substrate" evidence="1">
    <location>
        <position position="161"/>
    </location>
</feature>
<feature type="binding site" evidence="1">
    <location>
        <position position="45"/>
    </location>
    <ligand>
        <name>pyruvate</name>
        <dbReference type="ChEBI" id="CHEBI:15361"/>
    </ligand>
</feature>
<feature type="binding site" evidence="1">
    <location>
        <position position="203"/>
    </location>
    <ligand>
        <name>pyruvate</name>
        <dbReference type="ChEBI" id="CHEBI:15361"/>
    </ligand>
</feature>
<feature type="site" description="Part of a proton relay during catalysis" evidence="1">
    <location>
        <position position="44"/>
    </location>
</feature>
<feature type="site" description="Part of a proton relay during catalysis" evidence="1">
    <location>
        <position position="107"/>
    </location>
</feature>
<proteinExistence type="inferred from homology"/>
<accession>B6EJT2</accession>